<organism>
    <name type="scientific">Rhodopirellula baltica (strain DSM 10527 / NCIMB 13988 / SH1)</name>
    <dbReference type="NCBI Taxonomy" id="243090"/>
    <lineage>
        <taxon>Bacteria</taxon>
        <taxon>Pseudomonadati</taxon>
        <taxon>Planctomycetota</taxon>
        <taxon>Planctomycetia</taxon>
        <taxon>Pirellulales</taxon>
        <taxon>Pirellulaceae</taxon>
        <taxon>Rhodopirellula</taxon>
    </lineage>
</organism>
<dbReference type="EMBL" id="BX294145">
    <property type="protein sequence ID" value="CAD75190.1"/>
    <property type="status" value="ALT_INIT"/>
    <property type="molecule type" value="Genomic_DNA"/>
</dbReference>
<dbReference type="RefSeq" id="NP_867643.1">
    <property type="nucleotide sequence ID" value="NC_005027.1"/>
</dbReference>
<dbReference type="RefSeq" id="WP_007332031.1">
    <property type="nucleotide sequence ID" value="NC_005027.1"/>
</dbReference>
<dbReference type="SMR" id="Q7UP72"/>
<dbReference type="STRING" id="243090.RB7117"/>
<dbReference type="EnsemblBacteria" id="CAD75190">
    <property type="protein sequence ID" value="CAD75190"/>
    <property type="gene ID" value="RB7117"/>
</dbReference>
<dbReference type="KEGG" id="rba:RB7117"/>
<dbReference type="PATRIC" id="fig|243090.15.peg.3447"/>
<dbReference type="eggNOG" id="COG0291">
    <property type="taxonomic scope" value="Bacteria"/>
</dbReference>
<dbReference type="HOGENOM" id="CLU_1487933_0_0_0"/>
<dbReference type="InParanoid" id="Q7UP72"/>
<dbReference type="OrthoDB" id="47476at2"/>
<dbReference type="Proteomes" id="UP000001025">
    <property type="component" value="Chromosome"/>
</dbReference>
<dbReference type="GO" id="GO:0022625">
    <property type="term" value="C:cytosolic large ribosomal subunit"/>
    <property type="evidence" value="ECO:0000318"/>
    <property type="project" value="GO_Central"/>
</dbReference>
<dbReference type="GO" id="GO:0003735">
    <property type="term" value="F:structural constituent of ribosome"/>
    <property type="evidence" value="ECO:0000318"/>
    <property type="project" value="GO_Central"/>
</dbReference>
<dbReference type="GO" id="GO:0006412">
    <property type="term" value="P:translation"/>
    <property type="evidence" value="ECO:0007669"/>
    <property type="project" value="UniProtKB-UniRule"/>
</dbReference>
<dbReference type="FunFam" id="4.10.410.60:FF:000001">
    <property type="entry name" value="50S ribosomal protein L35"/>
    <property type="match status" value="1"/>
</dbReference>
<dbReference type="Gene3D" id="4.10.410.60">
    <property type="match status" value="1"/>
</dbReference>
<dbReference type="HAMAP" id="MF_00514">
    <property type="entry name" value="Ribosomal_bL35"/>
    <property type="match status" value="1"/>
</dbReference>
<dbReference type="InterPro" id="IPR001706">
    <property type="entry name" value="Ribosomal_bL35"/>
</dbReference>
<dbReference type="InterPro" id="IPR021137">
    <property type="entry name" value="Ribosomal_bL35-like"/>
</dbReference>
<dbReference type="InterPro" id="IPR037229">
    <property type="entry name" value="Ribosomal_bL35_sf"/>
</dbReference>
<dbReference type="NCBIfam" id="TIGR00001">
    <property type="entry name" value="rpmI_bact"/>
    <property type="match status" value="1"/>
</dbReference>
<dbReference type="PANTHER" id="PTHR33343">
    <property type="entry name" value="54S RIBOSOMAL PROTEIN BL35M"/>
    <property type="match status" value="1"/>
</dbReference>
<dbReference type="PANTHER" id="PTHR33343:SF1">
    <property type="entry name" value="LARGE RIBOSOMAL SUBUNIT PROTEIN BL35M"/>
    <property type="match status" value="1"/>
</dbReference>
<dbReference type="Pfam" id="PF01632">
    <property type="entry name" value="Ribosomal_L35p"/>
    <property type="match status" value="1"/>
</dbReference>
<dbReference type="PRINTS" id="PR00064">
    <property type="entry name" value="RIBOSOMALL35"/>
</dbReference>
<dbReference type="SUPFAM" id="SSF143034">
    <property type="entry name" value="L35p-like"/>
    <property type="match status" value="1"/>
</dbReference>
<gene>
    <name evidence="1" type="primary">rpmI</name>
    <name type="ordered locus">RB7117</name>
</gene>
<comment type="similarity">
    <text evidence="1">Belongs to the bacterial ribosomal protein bL35 family.</text>
</comment>
<comment type="sequence caution" evidence="3">
    <conflict type="erroneous initiation">
        <sequence resource="EMBL-CDS" id="CAD75190"/>
    </conflict>
</comment>
<proteinExistence type="inferred from homology"/>
<evidence type="ECO:0000255" key="1">
    <source>
        <dbReference type="HAMAP-Rule" id="MF_00514"/>
    </source>
</evidence>
<evidence type="ECO:0000256" key="2">
    <source>
        <dbReference type="SAM" id="MobiDB-lite"/>
    </source>
</evidence>
<evidence type="ECO:0000305" key="3"/>
<sequence length="68" mass="7529">MGTKIKTHKGTKKRFRLSAKGKAMHRQSGTSHLAKGLSKKRRRNLRGTTAVAECMEPTIHAALNGHSY</sequence>
<keyword id="KW-1185">Reference proteome</keyword>
<keyword id="KW-0687">Ribonucleoprotein</keyword>
<keyword id="KW-0689">Ribosomal protein</keyword>
<accession>Q7UP72</accession>
<name>RL35_RHOBA</name>
<feature type="chain" id="PRO_0000177409" description="Large ribosomal subunit protein bL35">
    <location>
        <begin position="1"/>
        <end position="68"/>
    </location>
</feature>
<feature type="region of interest" description="Disordered" evidence="2">
    <location>
        <begin position="1"/>
        <end position="43"/>
    </location>
</feature>
<feature type="compositionally biased region" description="Basic residues" evidence="2">
    <location>
        <begin position="1"/>
        <end position="25"/>
    </location>
</feature>
<protein>
    <recommendedName>
        <fullName evidence="1">Large ribosomal subunit protein bL35</fullName>
    </recommendedName>
    <alternativeName>
        <fullName evidence="3">50S ribosomal protein L35</fullName>
    </alternativeName>
</protein>
<reference key="1">
    <citation type="journal article" date="2003" name="Proc. Natl. Acad. Sci. U.S.A.">
        <title>Complete genome sequence of the marine planctomycete Pirellula sp. strain 1.</title>
        <authorList>
            <person name="Gloeckner F.O."/>
            <person name="Kube M."/>
            <person name="Bauer M."/>
            <person name="Teeling H."/>
            <person name="Lombardot T."/>
            <person name="Ludwig W."/>
            <person name="Gade D."/>
            <person name="Beck A."/>
            <person name="Borzym K."/>
            <person name="Heitmann K."/>
            <person name="Rabus R."/>
            <person name="Schlesner H."/>
            <person name="Amann R."/>
            <person name="Reinhardt R."/>
        </authorList>
    </citation>
    <scope>NUCLEOTIDE SEQUENCE [LARGE SCALE GENOMIC DNA]</scope>
    <source>
        <strain>DSM 10527 / NCIMB 13988 / SH1</strain>
    </source>
</reference>